<comment type="function">
    <text evidence="1">Cell wall formation.</text>
</comment>
<comment type="catalytic activity">
    <reaction evidence="1">
        <text>UDP-N-acetyl-alpha-D-muramate + L-alanine + ATP = UDP-N-acetyl-alpha-D-muramoyl-L-alanine + ADP + phosphate + H(+)</text>
        <dbReference type="Rhea" id="RHEA:23372"/>
        <dbReference type="ChEBI" id="CHEBI:15378"/>
        <dbReference type="ChEBI" id="CHEBI:30616"/>
        <dbReference type="ChEBI" id="CHEBI:43474"/>
        <dbReference type="ChEBI" id="CHEBI:57972"/>
        <dbReference type="ChEBI" id="CHEBI:70757"/>
        <dbReference type="ChEBI" id="CHEBI:83898"/>
        <dbReference type="ChEBI" id="CHEBI:456216"/>
        <dbReference type="EC" id="6.3.2.8"/>
    </reaction>
</comment>
<comment type="pathway">
    <text evidence="1">Cell wall biogenesis; peptidoglycan biosynthesis.</text>
</comment>
<comment type="subcellular location">
    <subcellularLocation>
        <location evidence="1">Cytoplasm</location>
    </subcellularLocation>
</comment>
<comment type="similarity">
    <text evidence="1">Belongs to the MurCDEF family.</text>
</comment>
<keyword id="KW-0067">ATP-binding</keyword>
<keyword id="KW-0131">Cell cycle</keyword>
<keyword id="KW-0132">Cell division</keyword>
<keyword id="KW-0133">Cell shape</keyword>
<keyword id="KW-0961">Cell wall biogenesis/degradation</keyword>
<keyword id="KW-0963">Cytoplasm</keyword>
<keyword id="KW-0436">Ligase</keyword>
<keyword id="KW-0547">Nucleotide-binding</keyword>
<keyword id="KW-0573">Peptidoglycan synthesis</keyword>
<reference key="1">
    <citation type="journal article" date="2011" name="Proc. Natl. Acad. Sci. U.S.A.">
        <title>Genomic anatomy of Escherichia coli O157:H7 outbreaks.</title>
        <authorList>
            <person name="Eppinger M."/>
            <person name="Mammel M.K."/>
            <person name="Leclerc J.E."/>
            <person name="Ravel J."/>
            <person name="Cebula T.A."/>
        </authorList>
    </citation>
    <scope>NUCLEOTIDE SEQUENCE [LARGE SCALE GENOMIC DNA]</scope>
    <source>
        <strain>EC4115 / EHEC</strain>
    </source>
</reference>
<feature type="chain" id="PRO_1000091099" description="UDP-N-acetylmuramate--L-alanine ligase">
    <location>
        <begin position="1"/>
        <end position="491"/>
    </location>
</feature>
<feature type="binding site" evidence="1">
    <location>
        <begin position="126"/>
        <end position="132"/>
    </location>
    <ligand>
        <name>ATP</name>
        <dbReference type="ChEBI" id="CHEBI:30616"/>
    </ligand>
</feature>
<protein>
    <recommendedName>
        <fullName evidence="1">UDP-N-acetylmuramate--L-alanine ligase</fullName>
        <ecNumber evidence="1">6.3.2.8</ecNumber>
    </recommendedName>
    <alternativeName>
        <fullName evidence="1">UDP-N-acetylmuramoyl-L-alanine synthetase</fullName>
    </alternativeName>
</protein>
<proteinExistence type="inferred from homology"/>
<dbReference type="EC" id="6.3.2.8" evidence="1"/>
<dbReference type="EMBL" id="CP001164">
    <property type="protein sequence ID" value="ACI39450.1"/>
    <property type="molecule type" value="Genomic_DNA"/>
</dbReference>
<dbReference type="RefSeq" id="WP_001096048.1">
    <property type="nucleotide sequence ID" value="NC_011353.1"/>
</dbReference>
<dbReference type="SMR" id="B5YZC7"/>
<dbReference type="GeneID" id="75169991"/>
<dbReference type="KEGG" id="ecf:ECH74115_0099"/>
<dbReference type="HOGENOM" id="CLU_028104_2_2_6"/>
<dbReference type="UniPathway" id="UPA00219"/>
<dbReference type="GO" id="GO:0005737">
    <property type="term" value="C:cytoplasm"/>
    <property type="evidence" value="ECO:0007669"/>
    <property type="project" value="UniProtKB-SubCell"/>
</dbReference>
<dbReference type="GO" id="GO:0005524">
    <property type="term" value="F:ATP binding"/>
    <property type="evidence" value="ECO:0007669"/>
    <property type="project" value="UniProtKB-UniRule"/>
</dbReference>
<dbReference type="GO" id="GO:0008763">
    <property type="term" value="F:UDP-N-acetylmuramate-L-alanine ligase activity"/>
    <property type="evidence" value="ECO:0007669"/>
    <property type="project" value="UniProtKB-UniRule"/>
</dbReference>
<dbReference type="GO" id="GO:0051301">
    <property type="term" value="P:cell division"/>
    <property type="evidence" value="ECO:0007669"/>
    <property type="project" value="UniProtKB-KW"/>
</dbReference>
<dbReference type="GO" id="GO:0071555">
    <property type="term" value="P:cell wall organization"/>
    <property type="evidence" value="ECO:0007669"/>
    <property type="project" value="UniProtKB-KW"/>
</dbReference>
<dbReference type="GO" id="GO:0009252">
    <property type="term" value="P:peptidoglycan biosynthetic process"/>
    <property type="evidence" value="ECO:0007669"/>
    <property type="project" value="UniProtKB-UniRule"/>
</dbReference>
<dbReference type="GO" id="GO:0008360">
    <property type="term" value="P:regulation of cell shape"/>
    <property type="evidence" value="ECO:0007669"/>
    <property type="project" value="UniProtKB-KW"/>
</dbReference>
<dbReference type="FunFam" id="3.40.1190.10:FF:000001">
    <property type="entry name" value="UDP-N-acetylmuramate--L-alanine ligase"/>
    <property type="match status" value="1"/>
</dbReference>
<dbReference type="FunFam" id="3.40.50.720:FF:000046">
    <property type="entry name" value="UDP-N-acetylmuramate--L-alanine ligase"/>
    <property type="match status" value="1"/>
</dbReference>
<dbReference type="FunFam" id="3.90.190.20:FF:000001">
    <property type="entry name" value="UDP-N-acetylmuramate--L-alanine ligase"/>
    <property type="match status" value="1"/>
</dbReference>
<dbReference type="Gene3D" id="3.90.190.20">
    <property type="entry name" value="Mur ligase, C-terminal domain"/>
    <property type="match status" value="1"/>
</dbReference>
<dbReference type="Gene3D" id="3.40.1190.10">
    <property type="entry name" value="Mur-like, catalytic domain"/>
    <property type="match status" value="1"/>
</dbReference>
<dbReference type="Gene3D" id="3.40.50.720">
    <property type="entry name" value="NAD(P)-binding Rossmann-like Domain"/>
    <property type="match status" value="1"/>
</dbReference>
<dbReference type="HAMAP" id="MF_00046">
    <property type="entry name" value="MurC"/>
    <property type="match status" value="1"/>
</dbReference>
<dbReference type="InterPro" id="IPR036565">
    <property type="entry name" value="Mur-like_cat_sf"/>
</dbReference>
<dbReference type="InterPro" id="IPR004101">
    <property type="entry name" value="Mur_ligase_C"/>
</dbReference>
<dbReference type="InterPro" id="IPR036615">
    <property type="entry name" value="Mur_ligase_C_dom_sf"/>
</dbReference>
<dbReference type="InterPro" id="IPR013221">
    <property type="entry name" value="Mur_ligase_cen"/>
</dbReference>
<dbReference type="InterPro" id="IPR000713">
    <property type="entry name" value="Mur_ligase_N"/>
</dbReference>
<dbReference type="InterPro" id="IPR050061">
    <property type="entry name" value="MurCDEF_pg_biosynth"/>
</dbReference>
<dbReference type="InterPro" id="IPR005758">
    <property type="entry name" value="UDP-N-AcMur_Ala_ligase_MurC"/>
</dbReference>
<dbReference type="NCBIfam" id="TIGR01082">
    <property type="entry name" value="murC"/>
    <property type="match status" value="1"/>
</dbReference>
<dbReference type="PANTHER" id="PTHR43445:SF3">
    <property type="entry name" value="UDP-N-ACETYLMURAMATE--L-ALANINE LIGASE"/>
    <property type="match status" value="1"/>
</dbReference>
<dbReference type="PANTHER" id="PTHR43445">
    <property type="entry name" value="UDP-N-ACETYLMURAMATE--L-ALANINE LIGASE-RELATED"/>
    <property type="match status" value="1"/>
</dbReference>
<dbReference type="Pfam" id="PF01225">
    <property type="entry name" value="Mur_ligase"/>
    <property type="match status" value="1"/>
</dbReference>
<dbReference type="Pfam" id="PF02875">
    <property type="entry name" value="Mur_ligase_C"/>
    <property type="match status" value="1"/>
</dbReference>
<dbReference type="Pfam" id="PF08245">
    <property type="entry name" value="Mur_ligase_M"/>
    <property type="match status" value="1"/>
</dbReference>
<dbReference type="SUPFAM" id="SSF51984">
    <property type="entry name" value="MurCD N-terminal domain"/>
    <property type="match status" value="1"/>
</dbReference>
<dbReference type="SUPFAM" id="SSF53623">
    <property type="entry name" value="MurD-like peptide ligases, catalytic domain"/>
    <property type="match status" value="1"/>
</dbReference>
<dbReference type="SUPFAM" id="SSF53244">
    <property type="entry name" value="MurD-like peptide ligases, peptide-binding domain"/>
    <property type="match status" value="1"/>
</dbReference>
<gene>
    <name evidence="1" type="primary">murC</name>
    <name type="ordered locus">ECH74115_0099</name>
</gene>
<evidence type="ECO:0000255" key="1">
    <source>
        <dbReference type="HAMAP-Rule" id="MF_00046"/>
    </source>
</evidence>
<accession>B5YZC7</accession>
<name>MURC_ECO5E</name>
<organism>
    <name type="scientific">Escherichia coli O157:H7 (strain EC4115 / EHEC)</name>
    <dbReference type="NCBI Taxonomy" id="444450"/>
    <lineage>
        <taxon>Bacteria</taxon>
        <taxon>Pseudomonadati</taxon>
        <taxon>Pseudomonadota</taxon>
        <taxon>Gammaproteobacteria</taxon>
        <taxon>Enterobacterales</taxon>
        <taxon>Enterobacteriaceae</taxon>
        <taxon>Escherichia</taxon>
    </lineage>
</organism>
<sequence>MNTQQLAKLRSIVPEMRRVRHIHFVGIGGAGMGGIAEVLANEGYQISGSDLAPNPVTQQLMNLGATIYFNHRPENVRDASVVVVSSAISADNPEIVAAHEARIPVIRRAEMLAELMRFRHGIAIAGTHGKTTTTAMVSSIYAEAGLDPTFVNGGLVKAAGVHARLGHGRYLIAEADESDASFLHLQPMVAIVTNIEADHMDTYQGDFENLKQTFINFLHNLPFYGRAVMCVDDPVIRELLPRVGRQTTTYGFSEDADVRVEDYQQIGPQGHFTLLRQDKEPMRVTLNAPGRHNALNAAAAVAVATEEGIDDEAILRALESFQGTGRRFDFLGEFPLEPVNGKSGTAMLVDDYGHHPTEVDATIKAARAGWPDKNLVMLFQPHRFTRTRDLYDDFANVLTQVDTLLMLEVYPAGEAPIPGADSRSLCRTIRGRGKIDPILVPDPAQVAEMLAPVLTGNDLILVQGAGNIGKIARSLAEIKLKPQTPEEEQHD</sequence>